<name>RNT_BUCBP</name>
<organism>
    <name type="scientific">Buchnera aphidicola subsp. Baizongia pistaciae (strain Bp)</name>
    <dbReference type="NCBI Taxonomy" id="224915"/>
    <lineage>
        <taxon>Bacteria</taxon>
        <taxon>Pseudomonadati</taxon>
        <taxon>Pseudomonadota</taxon>
        <taxon>Gammaproteobacteria</taxon>
        <taxon>Enterobacterales</taxon>
        <taxon>Erwiniaceae</taxon>
        <taxon>Buchnera</taxon>
    </lineage>
</organism>
<feature type="chain" id="PRO_0000208958" description="Ribonuclease T">
    <location>
        <begin position="1"/>
        <end position="217"/>
    </location>
</feature>
<feature type="domain" description="Exonuclease" evidence="1">
    <location>
        <begin position="20"/>
        <end position="194"/>
    </location>
</feature>
<feature type="active site" description="Proton donor/acceptor" evidence="1">
    <location>
        <position position="181"/>
    </location>
</feature>
<feature type="binding site" evidence="1">
    <location>
        <position position="23"/>
    </location>
    <ligand>
        <name>Mg(2+)</name>
        <dbReference type="ChEBI" id="CHEBI:18420"/>
        <label>1</label>
        <note>catalytic</note>
    </ligand>
</feature>
<feature type="binding site" evidence="1">
    <location>
        <position position="23"/>
    </location>
    <ligand>
        <name>Mg(2+)</name>
        <dbReference type="ChEBI" id="CHEBI:18420"/>
        <label>2</label>
        <note>catalytic</note>
    </ligand>
</feature>
<feature type="binding site" evidence="1">
    <location>
        <position position="25"/>
    </location>
    <ligand>
        <name>Mg(2+)</name>
        <dbReference type="ChEBI" id="CHEBI:18420"/>
        <label>2</label>
        <note>catalytic</note>
    </ligand>
</feature>
<feature type="binding site" evidence="1">
    <location>
        <position position="181"/>
    </location>
    <ligand>
        <name>Mg(2+)</name>
        <dbReference type="ChEBI" id="CHEBI:18420"/>
        <label>2</label>
        <note>catalytic</note>
    </ligand>
</feature>
<feature type="binding site" evidence="1">
    <location>
        <position position="186"/>
    </location>
    <ligand>
        <name>Mg(2+)</name>
        <dbReference type="ChEBI" id="CHEBI:18420"/>
        <label>2</label>
        <note>catalytic</note>
    </ligand>
</feature>
<feature type="site" description="Important for substrate binding and specificity" evidence="1">
    <location>
        <position position="29"/>
    </location>
</feature>
<feature type="site" description="Important for substrate binding and specificity" evidence="1">
    <location>
        <position position="77"/>
    </location>
</feature>
<feature type="site" description="Important for substrate binding and specificity" evidence="1">
    <location>
        <position position="124"/>
    </location>
</feature>
<feature type="site" description="Important for substrate binding and specificity" evidence="1">
    <location>
        <position position="146"/>
    </location>
</feature>
<reference key="1">
    <citation type="journal article" date="2003" name="Proc. Natl. Acad. Sci. U.S.A.">
        <title>Reductive genome evolution in Buchnera aphidicola.</title>
        <authorList>
            <person name="van Ham R.C.H.J."/>
            <person name="Kamerbeek J."/>
            <person name="Palacios C."/>
            <person name="Rausell C."/>
            <person name="Abascal F."/>
            <person name="Bastolla U."/>
            <person name="Fernandez J.M."/>
            <person name="Jimenez L."/>
            <person name="Postigo M."/>
            <person name="Silva F.J."/>
            <person name="Tamames J."/>
            <person name="Viguera E."/>
            <person name="Latorre A."/>
            <person name="Valencia A."/>
            <person name="Moran F."/>
            <person name="Moya A."/>
        </authorList>
    </citation>
    <scope>NUCLEOTIDE SEQUENCE [LARGE SCALE GENOMIC DNA]</scope>
    <source>
        <strain>Bp</strain>
    </source>
</reference>
<proteinExistence type="inferred from homology"/>
<evidence type="ECO:0000255" key="1">
    <source>
        <dbReference type="HAMAP-Rule" id="MF_00157"/>
    </source>
</evidence>
<gene>
    <name evidence="1" type="primary">rnt</name>
    <name type="ordered locus">bbp_177</name>
</gene>
<accession>P59497</accession>
<sequence>MCYSKINNSLRKRFRTFYPVVIDIETAGFNPETDAILEIAIITLKMNEFGLLEKEHLLHFHIQPFKGSRIDKKAIEFHGIDPFSPLRRAISEYEALYSIFNLIHKGIKSNNCTKSIIVAHNAIFDYNFLTAAITRTKIKNNPFHSFVIFDTATLSGLAVGQTVLARACKAIGLTFDNNQAHSALYDTQQTANLFCKIVNRWKTLGGWPPNDTRTIKL</sequence>
<comment type="function">
    <text evidence="1">Trims short 3' overhangs of a variety of RNA species, leaving a one or two nucleotide 3' overhang. Responsible for the end-turnover of tRNA: specifically removes the terminal AMP residue from uncharged tRNA (tRNA-C-C-A). Also appears to be involved in tRNA biosynthesis.</text>
</comment>
<comment type="cofactor">
    <cofactor evidence="1">
        <name>Mg(2+)</name>
        <dbReference type="ChEBI" id="CHEBI:18420"/>
    </cofactor>
    <text evidence="1">Binds two Mg(2+) per subunit. The active form of the enzyme binds two Mg(2+) ions in its active site. The first Mg(2+) forms only one salt bridge with the protein.</text>
</comment>
<comment type="subunit">
    <text evidence="1">Homodimer.</text>
</comment>
<comment type="similarity">
    <text evidence="1">Belongs to the RNase T family.</text>
</comment>
<dbReference type="EC" id="3.1.13.-" evidence="1"/>
<dbReference type="EMBL" id="AE016826">
    <property type="protein sequence ID" value="AAO26909.1"/>
    <property type="molecule type" value="Genomic_DNA"/>
</dbReference>
<dbReference type="RefSeq" id="WP_011091310.1">
    <property type="nucleotide sequence ID" value="NC_004545.1"/>
</dbReference>
<dbReference type="SMR" id="P59497"/>
<dbReference type="STRING" id="224915.bbp_177"/>
<dbReference type="KEGG" id="bab:bbp_177"/>
<dbReference type="eggNOG" id="COG0847">
    <property type="taxonomic scope" value="Bacteria"/>
</dbReference>
<dbReference type="HOGENOM" id="CLU_082724_0_0_6"/>
<dbReference type="OrthoDB" id="9778264at2"/>
<dbReference type="Proteomes" id="UP000000601">
    <property type="component" value="Chromosome"/>
</dbReference>
<dbReference type="GO" id="GO:0005829">
    <property type="term" value="C:cytosol"/>
    <property type="evidence" value="ECO:0007669"/>
    <property type="project" value="TreeGrafter"/>
</dbReference>
<dbReference type="GO" id="GO:0008408">
    <property type="term" value="F:3'-5' exonuclease activity"/>
    <property type="evidence" value="ECO:0007669"/>
    <property type="project" value="TreeGrafter"/>
</dbReference>
<dbReference type="GO" id="GO:0000287">
    <property type="term" value="F:magnesium ion binding"/>
    <property type="evidence" value="ECO:0007669"/>
    <property type="project" value="UniProtKB-UniRule"/>
</dbReference>
<dbReference type="GO" id="GO:0003676">
    <property type="term" value="F:nucleic acid binding"/>
    <property type="evidence" value="ECO:0007669"/>
    <property type="project" value="InterPro"/>
</dbReference>
<dbReference type="GO" id="GO:0016896">
    <property type="term" value="F:RNA exonuclease activity, producing 5'-phosphomonoesters"/>
    <property type="evidence" value="ECO:0007669"/>
    <property type="project" value="UniProtKB-UniRule"/>
</dbReference>
<dbReference type="GO" id="GO:0045004">
    <property type="term" value="P:DNA replication proofreading"/>
    <property type="evidence" value="ECO:0007669"/>
    <property type="project" value="TreeGrafter"/>
</dbReference>
<dbReference type="GO" id="GO:0008033">
    <property type="term" value="P:tRNA processing"/>
    <property type="evidence" value="ECO:0007669"/>
    <property type="project" value="UniProtKB-KW"/>
</dbReference>
<dbReference type="FunFam" id="3.30.420.10:FF:000009">
    <property type="entry name" value="Ribonuclease T"/>
    <property type="match status" value="1"/>
</dbReference>
<dbReference type="Gene3D" id="3.30.420.10">
    <property type="entry name" value="Ribonuclease H-like superfamily/Ribonuclease H"/>
    <property type="match status" value="1"/>
</dbReference>
<dbReference type="HAMAP" id="MF_00157">
    <property type="entry name" value="RNase_T"/>
    <property type="match status" value="1"/>
</dbReference>
<dbReference type="InterPro" id="IPR013520">
    <property type="entry name" value="Exonuclease_RNaseT/DNA_pol3"/>
</dbReference>
<dbReference type="InterPro" id="IPR005987">
    <property type="entry name" value="RNase_T"/>
</dbReference>
<dbReference type="InterPro" id="IPR012337">
    <property type="entry name" value="RNaseH-like_sf"/>
</dbReference>
<dbReference type="InterPro" id="IPR036397">
    <property type="entry name" value="RNaseH_sf"/>
</dbReference>
<dbReference type="NCBIfam" id="TIGR01298">
    <property type="entry name" value="RNaseT"/>
    <property type="match status" value="1"/>
</dbReference>
<dbReference type="PANTHER" id="PTHR30231">
    <property type="entry name" value="DNA POLYMERASE III SUBUNIT EPSILON"/>
    <property type="match status" value="1"/>
</dbReference>
<dbReference type="PANTHER" id="PTHR30231:SF2">
    <property type="entry name" value="RIBONUCLEASE T"/>
    <property type="match status" value="1"/>
</dbReference>
<dbReference type="Pfam" id="PF00929">
    <property type="entry name" value="RNase_T"/>
    <property type="match status" value="1"/>
</dbReference>
<dbReference type="SMART" id="SM00479">
    <property type="entry name" value="EXOIII"/>
    <property type="match status" value="1"/>
</dbReference>
<dbReference type="SUPFAM" id="SSF53098">
    <property type="entry name" value="Ribonuclease H-like"/>
    <property type="match status" value="1"/>
</dbReference>
<protein>
    <recommendedName>
        <fullName evidence="1">Ribonuclease T</fullName>
        <ecNumber evidence="1">3.1.13.-</ecNumber>
    </recommendedName>
    <alternativeName>
        <fullName evidence="1">Exoribonuclease T</fullName>
        <shortName evidence="1">RNase T</shortName>
    </alternativeName>
</protein>
<keyword id="KW-0269">Exonuclease</keyword>
<keyword id="KW-0378">Hydrolase</keyword>
<keyword id="KW-0460">Magnesium</keyword>
<keyword id="KW-0479">Metal-binding</keyword>
<keyword id="KW-0540">Nuclease</keyword>
<keyword id="KW-1185">Reference proteome</keyword>
<keyword id="KW-0819">tRNA processing</keyword>